<evidence type="ECO:0000255" key="1">
    <source>
        <dbReference type="HAMAP-Rule" id="MF_01312"/>
    </source>
</evidence>
<proteinExistence type="inferred from homology"/>
<gene>
    <name evidence="1" type="primary">norV</name>
    <name evidence="1" type="synonym">flrD</name>
    <name type="ordered locus">ECP_2670</name>
</gene>
<protein>
    <recommendedName>
        <fullName evidence="1">Anaerobic nitric oxide reductase flavorubredoxin</fullName>
        <shortName evidence="1">FlRd</shortName>
        <shortName evidence="1">FlavoRb</shortName>
    </recommendedName>
</protein>
<keyword id="KW-0963">Cytoplasm</keyword>
<keyword id="KW-0249">Electron transport</keyword>
<keyword id="KW-0285">Flavoprotein</keyword>
<keyword id="KW-0288">FMN</keyword>
<keyword id="KW-0408">Iron</keyword>
<keyword id="KW-0479">Metal-binding</keyword>
<keyword id="KW-0560">Oxidoreductase</keyword>
<keyword id="KW-0813">Transport</keyword>
<feature type="chain" id="PRO_0000305594" description="Anaerobic nitric oxide reductase flavorubredoxin">
    <location>
        <begin position="1"/>
        <end position="479"/>
    </location>
</feature>
<feature type="domain" description="Flavodoxin-like" evidence="1">
    <location>
        <begin position="254"/>
        <end position="393"/>
    </location>
</feature>
<feature type="domain" description="Rubredoxin-like" evidence="1">
    <location>
        <begin position="423"/>
        <end position="474"/>
    </location>
</feature>
<feature type="region of interest" description="Zinc metallo-hydrolase">
    <location>
        <begin position="30"/>
        <end position="210"/>
    </location>
</feature>
<feature type="binding site" evidence="1">
    <location>
        <position position="79"/>
    </location>
    <ligand>
        <name>Fe cation</name>
        <dbReference type="ChEBI" id="CHEBI:24875"/>
        <label>1</label>
    </ligand>
</feature>
<feature type="binding site" evidence="1">
    <location>
        <position position="81"/>
    </location>
    <ligand>
        <name>Fe cation</name>
        <dbReference type="ChEBI" id="CHEBI:24875"/>
        <label>1</label>
    </ligand>
</feature>
<feature type="binding site" evidence="1">
    <location>
        <position position="83"/>
    </location>
    <ligand>
        <name>Fe cation</name>
        <dbReference type="ChEBI" id="CHEBI:24875"/>
        <label>2</label>
    </ligand>
</feature>
<feature type="binding site" evidence="1">
    <location>
        <position position="147"/>
    </location>
    <ligand>
        <name>Fe cation</name>
        <dbReference type="ChEBI" id="CHEBI:24875"/>
        <label>1</label>
    </ligand>
</feature>
<feature type="binding site" evidence="1">
    <location>
        <position position="166"/>
    </location>
    <ligand>
        <name>Fe cation</name>
        <dbReference type="ChEBI" id="CHEBI:24875"/>
        <label>1</label>
    </ligand>
</feature>
<feature type="binding site" evidence="1">
    <location>
        <position position="166"/>
    </location>
    <ligand>
        <name>Fe cation</name>
        <dbReference type="ChEBI" id="CHEBI:24875"/>
        <label>2</label>
    </ligand>
</feature>
<feature type="binding site" evidence="1">
    <location>
        <position position="227"/>
    </location>
    <ligand>
        <name>Fe cation</name>
        <dbReference type="ChEBI" id="CHEBI:24875"/>
        <label>2</label>
    </ligand>
</feature>
<feature type="binding site" evidence="1">
    <location>
        <begin position="260"/>
        <end position="264"/>
    </location>
    <ligand>
        <name>FMN</name>
        <dbReference type="ChEBI" id="CHEBI:58210"/>
    </ligand>
</feature>
<feature type="binding site" evidence="1">
    <location>
        <begin position="342"/>
        <end position="369"/>
    </location>
    <ligand>
        <name>FMN</name>
        <dbReference type="ChEBI" id="CHEBI:58210"/>
    </ligand>
</feature>
<feature type="binding site" evidence="1">
    <location>
        <position position="428"/>
    </location>
    <ligand>
        <name>Fe cation</name>
        <dbReference type="ChEBI" id="CHEBI:24875"/>
        <label>3</label>
    </ligand>
</feature>
<feature type="binding site" evidence="1">
    <location>
        <position position="431"/>
    </location>
    <ligand>
        <name>Fe cation</name>
        <dbReference type="ChEBI" id="CHEBI:24875"/>
        <label>3</label>
    </ligand>
</feature>
<feature type="binding site" evidence="1">
    <location>
        <position position="461"/>
    </location>
    <ligand>
        <name>Fe cation</name>
        <dbReference type="ChEBI" id="CHEBI:24875"/>
        <label>3</label>
    </ligand>
</feature>
<feature type="binding site" evidence="1">
    <location>
        <position position="464"/>
    </location>
    <ligand>
        <name>Fe cation</name>
        <dbReference type="ChEBI" id="CHEBI:24875"/>
        <label>3</label>
    </ligand>
</feature>
<reference key="1">
    <citation type="journal article" date="2006" name="Mol. Microbiol.">
        <title>Role of pathogenicity island-associated integrases in the genome plasticity of uropathogenic Escherichia coli strain 536.</title>
        <authorList>
            <person name="Hochhut B."/>
            <person name="Wilde C."/>
            <person name="Balling G."/>
            <person name="Middendorf B."/>
            <person name="Dobrindt U."/>
            <person name="Brzuszkiewicz E."/>
            <person name="Gottschalk G."/>
            <person name="Carniel E."/>
            <person name="Hacker J."/>
        </authorList>
    </citation>
    <scope>NUCLEOTIDE SEQUENCE [LARGE SCALE GENOMIC DNA]</scope>
    <source>
        <strain>536 / UPEC</strain>
    </source>
</reference>
<accession>Q0TEH0</accession>
<organism>
    <name type="scientific">Escherichia coli O6:K15:H31 (strain 536 / UPEC)</name>
    <dbReference type="NCBI Taxonomy" id="362663"/>
    <lineage>
        <taxon>Bacteria</taxon>
        <taxon>Pseudomonadati</taxon>
        <taxon>Pseudomonadota</taxon>
        <taxon>Gammaproteobacteria</taxon>
        <taxon>Enterobacterales</taxon>
        <taxon>Enterobacteriaceae</taxon>
        <taxon>Escherichia</taxon>
    </lineage>
</organism>
<comment type="function">
    <text evidence="1">Anaerobic nitric oxide reductase; uses NADH to detoxify nitric oxide (NO), protecting several 4Fe-4S NO-sensitive enzymes. Has at least 2 reductase partners, only one of which (NorW, flavorubredoxin reductase) has been identified. NO probably binds to the di-iron center; electrons enter from the NorW at rubredoxin and are transferred sequentially to the FMN center and the di-iron center. Also able to function as an aerobic oxygen reductase.</text>
</comment>
<comment type="cofactor">
    <cofactor evidence="1">
        <name>Fe cation</name>
        <dbReference type="ChEBI" id="CHEBI:24875"/>
    </cofactor>
    <text evidence="1">Binds 3 Fe cations per monomer.</text>
</comment>
<comment type="cofactor">
    <cofactor evidence="1">
        <name>FMN</name>
        <dbReference type="ChEBI" id="CHEBI:58210"/>
    </cofactor>
    <text evidence="1">Binds 1 FMN per monomer.</text>
</comment>
<comment type="pathway">
    <text evidence="1">Nitrogen metabolism; nitric oxide reduction.</text>
</comment>
<comment type="subunit">
    <text evidence="1">Homotetramer.</text>
</comment>
<comment type="subcellular location">
    <subcellularLocation>
        <location evidence="1">Cytoplasm</location>
    </subcellularLocation>
</comment>
<comment type="similarity">
    <text evidence="1">In the N-terminal section; belongs to the zinc metallo-hydrolase group 3 family.</text>
</comment>
<sequence>MSIVVKNNIHWVGQRDWEVRDFHGTEYKTLRGSSYNSYLIREEKNVLIDTVDHKFSREFVQNLRNEIDLADIDYIVINHAEEDHAGALTELMAQIPDTPIYCTANAIDSINGHHHHPEWNFNVVKTGDTLDIGNGKQLIFVETPMLHWPDSMMTYLTGDAVLFSNDAFGQHYCDEHLFNDEVDQTELFEQCQRYYANILTPFSRLVTPKITEILGFNLPVDMIATSHGVVWRDNPTQIVELYLKWAADYQEDRITIVYDTMSNNTRMMADAIAQGIAETDPRVAVKIFNVARSDKNEILTNVFRSKGVLVGTSTMNNVMMPKIAGLVEEMTGLRFRNKRASAFGSHGWSGGAVDRLSTRLQDAGFEMSLSLKAKWRPDQDALELCREHGREIARQWALAPLPQSTVNTVVEEETSAATTADLGPRMQCSVCQWIYDPAKGEPMQDVAPGTPWSEVPDNFLCPECSLGKDVFDELASEAK</sequence>
<name>NORV_ECOL5</name>
<dbReference type="EMBL" id="CP000247">
    <property type="protein sequence ID" value="ABG70659.1"/>
    <property type="molecule type" value="Genomic_DNA"/>
</dbReference>
<dbReference type="RefSeq" id="WP_000029638.1">
    <property type="nucleotide sequence ID" value="NC_008253.1"/>
</dbReference>
<dbReference type="SMR" id="Q0TEH0"/>
<dbReference type="KEGG" id="ecp:ECP_2670"/>
<dbReference type="HOGENOM" id="CLU_017490_0_1_6"/>
<dbReference type="UniPathway" id="UPA00638"/>
<dbReference type="Proteomes" id="UP000009182">
    <property type="component" value="Chromosome"/>
</dbReference>
<dbReference type="GO" id="GO:0005737">
    <property type="term" value="C:cytoplasm"/>
    <property type="evidence" value="ECO:0007669"/>
    <property type="project" value="UniProtKB-SubCell"/>
</dbReference>
<dbReference type="GO" id="GO:0009055">
    <property type="term" value="F:electron transfer activity"/>
    <property type="evidence" value="ECO:0007669"/>
    <property type="project" value="UniProtKB-UniRule"/>
</dbReference>
<dbReference type="GO" id="GO:0010181">
    <property type="term" value="F:FMN binding"/>
    <property type="evidence" value="ECO:0007669"/>
    <property type="project" value="InterPro"/>
</dbReference>
<dbReference type="GO" id="GO:0005506">
    <property type="term" value="F:iron ion binding"/>
    <property type="evidence" value="ECO:0007669"/>
    <property type="project" value="InterPro"/>
</dbReference>
<dbReference type="GO" id="GO:0016966">
    <property type="term" value="F:nitric oxide reductase activity"/>
    <property type="evidence" value="ECO:0007669"/>
    <property type="project" value="InterPro"/>
</dbReference>
<dbReference type="CDD" id="cd07709">
    <property type="entry name" value="flavodiiron_proteins_MBL-fold"/>
    <property type="match status" value="1"/>
</dbReference>
<dbReference type="CDD" id="cd00730">
    <property type="entry name" value="rubredoxin"/>
    <property type="match status" value="1"/>
</dbReference>
<dbReference type="FunFam" id="2.20.28.10:FF:000010">
    <property type="entry name" value="Anaerobic nitric oxide reductase flavorubredoxin"/>
    <property type="match status" value="1"/>
</dbReference>
<dbReference type="FunFam" id="3.40.50.360:FF:000012">
    <property type="entry name" value="Anaerobic nitric oxide reductase flavorubredoxin"/>
    <property type="match status" value="1"/>
</dbReference>
<dbReference type="FunFam" id="3.60.15.10:FF:000009">
    <property type="entry name" value="Anaerobic nitric oxide reductase flavorubredoxin"/>
    <property type="match status" value="1"/>
</dbReference>
<dbReference type="Gene3D" id="2.20.28.10">
    <property type="match status" value="1"/>
</dbReference>
<dbReference type="Gene3D" id="3.40.50.360">
    <property type="match status" value="1"/>
</dbReference>
<dbReference type="Gene3D" id="3.60.15.10">
    <property type="entry name" value="Ribonuclease Z/Hydroxyacylglutathione hydrolase-like"/>
    <property type="match status" value="1"/>
</dbReference>
<dbReference type="HAMAP" id="MF_01312">
    <property type="entry name" value="NorV"/>
    <property type="match status" value="1"/>
</dbReference>
<dbReference type="InterPro" id="IPR023957">
    <property type="entry name" value="Anaer_NO_rdtase_flvorubredoxin"/>
</dbReference>
<dbReference type="InterPro" id="IPR008254">
    <property type="entry name" value="Flavodoxin/NO_synth"/>
</dbReference>
<dbReference type="InterPro" id="IPR029039">
    <property type="entry name" value="Flavoprotein-like_sf"/>
</dbReference>
<dbReference type="InterPro" id="IPR001279">
    <property type="entry name" value="Metallo-B-lactamas"/>
</dbReference>
<dbReference type="InterPro" id="IPR045761">
    <property type="entry name" value="ODP_dom"/>
</dbReference>
<dbReference type="InterPro" id="IPR036866">
    <property type="entry name" value="RibonucZ/Hydroxyglut_hydro"/>
</dbReference>
<dbReference type="InterPro" id="IPR024934">
    <property type="entry name" value="Rubredoxin-like_dom"/>
</dbReference>
<dbReference type="InterPro" id="IPR016440">
    <property type="entry name" value="Rubredoxin-O_OxRdtase"/>
</dbReference>
<dbReference type="InterPro" id="IPR024935">
    <property type="entry name" value="Rubredoxin_dom"/>
</dbReference>
<dbReference type="NCBIfam" id="NF003954">
    <property type="entry name" value="PRK05452.1"/>
    <property type="match status" value="1"/>
</dbReference>
<dbReference type="PANTHER" id="PTHR43717">
    <property type="entry name" value="ANAEROBIC NITRIC OXIDE REDUCTASE FLAVORUBREDOXIN"/>
    <property type="match status" value="1"/>
</dbReference>
<dbReference type="PANTHER" id="PTHR43717:SF1">
    <property type="entry name" value="ANAEROBIC NITRIC OXIDE REDUCTASE FLAVORUBREDOXIN"/>
    <property type="match status" value="1"/>
</dbReference>
<dbReference type="Pfam" id="PF00258">
    <property type="entry name" value="Flavodoxin_1"/>
    <property type="match status" value="1"/>
</dbReference>
<dbReference type="Pfam" id="PF19583">
    <property type="entry name" value="ODP"/>
    <property type="match status" value="1"/>
</dbReference>
<dbReference type="Pfam" id="PF00301">
    <property type="entry name" value="Rubredoxin"/>
    <property type="match status" value="1"/>
</dbReference>
<dbReference type="PIRSF" id="PIRSF005243">
    <property type="entry name" value="ROO"/>
    <property type="match status" value="1"/>
</dbReference>
<dbReference type="PRINTS" id="PR00163">
    <property type="entry name" value="RUBREDOXIN"/>
</dbReference>
<dbReference type="SMART" id="SM00849">
    <property type="entry name" value="Lactamase_B"/>
    <property type="match status" value="1"/>
</dbReference>
<dbReference type="SUPFAM" id="SSF52218">
    <property type="entry name" value="Flavoproteins"/>
    <property type="match status" value="1"/>
</dbReference>
<dbReference type="SUPFAM" id="SSF56281">
    <property type="entry name" value="Metallo-hydrolase/oxidoreductase"/>
    <property type="match status" value="1"/>
</dbReference>
<dbReference type="SUPFAM" id="SSF57802">
    <property type="entry name" value="Rubredoxin-like"/>
    <property type="match status" value="1"/>
</dbReference>
<dbReference type="PROSITE" id="PS50902">
    <property type="entry name" value="FLAVODOXIN_LIKE"/>
    <property type="match status" value="1"/>
</dbReference>
<dbReference type="PROSITE" id="PS50903">
    <property type="entry name" value="RUBREDOXIN_LIKE"/>
    <property type="match status" value="1"/>
</dbReference>